<comment type="function">
    <text evidence="1">Coup (chicken ovalbumin upstream promoter) transcription factor binds to the ovalbumin promoter and, in conjunction with another protein (S300-II) stimulates initiation of transcription. Binds to both direct repeats and palindromes of the 5'-AGGTCA-3' motif. Represses transcriptional activity of LHCG (By similarity).</text>
</comment>
<comment type="subunit">
    <text evidence="2">Binds DNA as dimer; homodimer and probable heterodimer with NR2F6. Interacts with GTF2B; this interaction is direct. Interacts with COPS2.</text>
</comment>
<comment type="subcellular location">
    <subcellularLocation>
        <location evidence="3">Nucleus</location>
    </subcellularLocation>
</comment>
<comment type="similarity">
    <text evidence="6">Belongs to the nuclear hormone receptor family. NR2 subfamily.</text>
</comment>
<protein>
    <recommendedName>
        <fullName>COUP transcription factor 1</fullName>
        <shortName>COUP-TF1</shortName>
    </recommendedName>
    <alternativeName>
        <fullName>COUP transcription factor I</fullName>
        <shortName>COUP-TF I</shortName>
    </alternativeName>
    <alternativeName>
        <fullName>Nuclear receptor subfamily 2 group F member 1</fullName>
    </alternativeName>
</protein>
<name>COT1_BOVIN</name>
<sequence length="424" mass="46284">MAMVVSSWRDPQDDVAGGNPGGPNPAAQAARGGGGGAGEQQQQQAGSGAPHTPQTPGQPGAPATPGTAGDKGQGPPGSGQSQQHIECVVCGDKSSGKHYGQFTCEGCKSFFKRSVRRNLTYTCRANRNCPIDQHHRNQCQYCRLKKCLKVGMRREAVQRGRMPPTQPNPGQYALTNGDPLNGHCYLSGYISLLLRAEPYPTSRYGSQCMQPNNIMGIENICELAARLLFSAVEWARNIPFFPDLQITDQVSLLRLTWSELFVLNAAQCSMPLHVAPLLAAAGLHASPMSADRVVAFMDHIRIFQEQVEKLKALHVDSAEYSCLKAIVLFTSDACGLSDAAHIESLQEKSQCALEEYVRSQYPNQPSRFGKLLLRLPSLRTVSSSVIEQLFFVRLVGKTPIETLIRDMLLSGSSFNWPYMSIQCS</sequence>
<keyword id="KW-0010">Activator</keyword>
<keyword id="KW-0238">DNA-binding</keyword>
<keyword id="KW-0479">Metal-binding</keyword>
<keyword id="KW-0539">Nucleus</keyword>
<keyword id="KW-0675">Receptor</keyword>
<keyword id="KW-1185">Reference proteome</keyword>
<keyword id="KW-0804">Transcription</keyword>
<keyword id="KW-0805">Transcription regulation</keyword>
<keyword id="KW-0862">Zinc</keyword>
<keyword id="KW-0863">Zinc-finger</keyword>
<reference key="1">
    <citation type="submission" date="1999-09" db="EMBL/GenBank/DDBJ databases">
        <authorList>
            <person name="Walther N."/>
        </authorList>
    </citation>
    <scope>NUCLEOTIDE SEQUENCE [MRNA]</scope>
    <source>
        <tissue>Testis</tissue>
    </source>
</reference>
<feature type="chain" id="PRO_0000053601" description="COUP transcription factor 1">
    <location>
        <begin position="1"/>
        <end position="424"/>
    </location>
</feature>
<feature type="domain" description="NR LBD" evidence="4">
    <location>
        <begin position="185"/>
        <end position="411"/>
    </location>
</feature>
<feature type="DNA-binding region" description="Nuclear receptor" evidence="3">
    <location>
        <begin position="84"/>
        <end position="159"/>
    </location>
</feature>
<feature type="zinc finger region" description="NR C4-type" evidence="3">
    <location>
        <begin position="87"/>
        <end position="107"/>
    </location>
</feature>
<feature type="zinc finger region" description="NR C4-type" evidence="3">
    <location>
        <begin position="123"/>
        <end position="147"/>
    </location>
</feature>
<feature type="region of interest" description="Disordered" evidence="5">
    <location>
        <begin position="1"/>
        <end position="82"/>
    </location>
</feature>
<feature type="compositionally biased region" description="Low complexity" evidence="5">
    <location>
        <begin position="39"/>
        <end position="68"/>
    </location>
</feature>
<gene>
    <name type="primary">NR2F1</name>
    <name type="synonym">TFCOUP1</name>
</gene>
<dbReference type="EMBL" id="AJ249440">
    <property type="protein sequence ID" value="CAB55623.1"/>
    <property type="molecule type" value="mRNA"/>
</dbReference>
<dbReference type="PIR" id="JH0786">
    <property type="entry name" value="JH0786"/>
</dbReference>
<dbReference type="RefSeq" id="NP_786998.1">
    <property type="nucleotide sequence ID" value="NM_175804.2"/>
</dbReference>
<dbReference type="SMR" id="Q9TTR8"/>
<dbReference type="BioGRID" id="160099">
    <property type="interactions" value="1"/>
</dbReference>
<dbReference type="FunCoup" id="Q9TTR8">
    <property type="interactions" value="201"/>
</dbReference>
<dbReference type="STRING" id="9913.ENSBTAP00000023401"/>
<dbReference type="PaxDb" id="9913-ENSBTAP00000023401"/>
<dbReference type="Ensembl" id="ENSBTAT00000023401.6">
    <property type="protein sequence ID" value="ENSBTAP00000023401.6"/>
    <property type="gene ID" value="ENSBTAG00000017599.7"/>
</dbReference>
<dbReference type="GeneID" id="327684"/>
<dbReference type="KEGG" id="bta:327684"/>
<dbReference type="CTD" id="7025"/>
<dbReference type="VEuPathDB" id="HostDB:ENSBTAG00000017599"/>
<dbReference type="VGNC" id="VGNC:32240">
    <property type="gene designation" value="NR2F1"/>
</dbReference>
<dbReference type="eggNOG" id="KOG3575">
    <property type="taxonomic scope" value="Eukaryota"/>
</dbReference>
<dbReference type="GeneTree" id="ENSGT00940000157876"/>
<dbReference type="InParanoid" id="Q9TTR8"/>
<dbReference type="OMA" id="QWKEEHR"/>
<dbReference type="OrthoDB" id="5873264at2759"/>
<dbReference type="Reactome" id="R-BTA-383280">
    <property type="pathway name" value="Nuclear Receptor transcription pathway"/>
</dbReference>
<dbReference type="Proteomes" id="UP000009136">
    <property type="component" value="Chromosome 7"/>
</dbReference>
<dbReference type="Bgee" id="ENSBTAG00000017599">
    <property type="expression patterns" value="Expressed in pigment epithelium of eye and 103 other cell types or tissues"/>
</dbReference>
<dbReference type="GO" id="GO:0005829">
    <property type="term" value="C:cytosol"/>
    <property type="evidence" value="ECO:0007669"/>
    <property type="project" value="Ensembl"/>
</dbReference>
<dbReference type="GO" id="GO:0005654">
    <property type="term" value="C:nucleoplasm"/>
    <property type="evidence" value="ECO:0007669"/>
    <property type="project" value="Ensembl"/>
</dbReference>
<dbReference type="GO" id="GO:0001227">
    <property type="term" value="F:DNA-binding transcription repressor activity, RNA polymerase II-specific"/>
    <property type="evidence" value="ECO:0007669"/>
    <property type="project" value="Ensembl"/>
</dbReference>
<dbReference type="GO" id="GO:0004879">
    <property type="term" value="F:nuclear receptor activity"/>
    <property type="evidence" value="ECO:0000318"/>
    <property type="project" value="GO_Central"/>
</dbReference>
<dbReference type="GO" id="GO:0000978">
    <property type="term" value="F:RNA polymerase II cis-regulatory region sequence-specific DNA binding"/>
    <property type="evidence" value="ECO:0000318"/>
    <property type="project" value="GO_Central"/>
</dbReference>
<dbReference type="GO" id="GO:0008270">
    <property type="term" value="F:zinc ion binding"/>
    <property type="evidence" value="ECO:0007669"/>
    <property type="project" value="UniProtKB-KW"/>
</dbReference>
<dbReference type="GO" id="GO:0030154">
    <property type="term" value="P:cell differentiation"/>
    <property type="evidence" value="ECO:0000318"/>
    <property type="project" value="GO_Central"/>
</dbReference>
<dbReference type="GO" id="GO:0000122">
    <property type="term" value="P:negative regulation of transcription by RNA polymerase II"/>
    <property type="evidence" value="ECO:0000318"/>
    <property type="project" value="GO_Central"/>
</dbReference>
<dbReference type="GO" id="GO:0007399">
    <property type="term" value="P:nervous system development"/>
    <property type="evidence" value="ECO:0000318"/>
    <property type="project" value="GO_Central"/>
</dbReference>
<dbReference type="CDD" id="cd06958">
    <property type="entry name" value="NR_DBD_COUP_TF"/>
    <property type="match status" value="1"/>
</dbReference>
<dbReference type="CDD" id="cd06948">
    <property type="entry name" value="NR_LBD_COUP-TF"/>
    <property type="match status" value="1"/>
</dbReference>
<dbReference type="FunFam" id="1.10.565.10:FF:000003">
    <property type="entry name" value="Coup transcription factor 2 isoform 1"/>
    <property type="match status" value="1"/>
</dbReference>
<dbReference type="FunFam" id="3.30.50.10:FF:000016">
    <property type="entry name" value="Nuclear receptor subfamily 2 group F member 1"/>
    <property type="match status" value="1"/>
</dbReference>
<dbReference type="Gene3D" id="3.30.50.10">
    <property type="entry name" value="Erythroid Transcription Factor GATA-1, subunit A"/>
    <property type="match status" value="1"/>
</dbReference>
<dbReference type="Gene3D" id="1.10.565.10">
    <property type="entry name" value="Retinoid X Receptor"/>
    <property type="match status" value="1"/>
</dbReference>
<dbReference type="InterPro" id="IPR035500">
    <property type="entry name" value="NHR-like_dom_sf"/>
</dbReference>
<dbReference type="InterPro" id="IPR000536">
    <property type="entry name" value="Nucl_hrmn_rcpt_lig-bd"/>
</dbReference>
<dbReference type="InterPro" id="IPR050274">
    <property type="entry name" value="Nuclear_hormone_rcpt_NR2"/>
</dbReference>
<dbReference type="InterPro" id="IPR001723">
    <property type="entry name" value="Nuclear_hrmn_rcpt"/>
</dbReference>
<dbReference type="InterPro" id="IPR001628">
    <property type="entry name" value="Znf_hrmn_rcpt"/>
</dbReference>
<dbReference type="InterPro" id="IPR013088">
    <property type="entry name" value="Znf_NHR/GATA"/>
</dbReference>
<dbReference type="PANTHER" id="PTHR24083">
    <property type="entry name" value="NUCLEAR HORMONE RECEPTOR"/>
    <property type="match status" value="1"/>
</dbReference>
<dbReference type="Pfam" id="PF00104">
    <property type="entry name" value="Hormone_recep"/>
    <property type="match status" value="1"/>
</dbReference>
<dbReference type="Pfam" id="PF00105">
    <property type="entry name" value="zf-C4"/>
    <property type="match status" value="1"/>
</dbReference>
<dbReference type="PRINTS" id="PR01282">
    <property type="entry name" value="COUPTNFACTOR"/>
</dbReference>
<dbReference type="PRINTS" id="PR00398">
    <property type="entry name" value="STRDHORMONER"/>
</dbReference>
<dbReference type="PRINTS" id="PR00047">
    <property type="entry name" value="STROIDFINGER"/>
</dbReference>
<dbReference type="SMART" id="SM00430">
    <property type="entry name" value="HOLI"/>
    <property type="match status" value="1"/>
</dbReference>
<dbReference type="SMART" id="SM00399">
    <property type="entry name" value="ZnF_C4"/>
    <property type="match status" value="1"/>
</dbReference>
<dbReference type="SUPFAM" id="SSF57716">
    <property type="entry name" value="Glucocorticoid receptor-like (DNA-binding domain)"/>
    <property type="match status" value="1"/>
</dbReference>
<dbReference type="SUPFAM" id="SSF48508">
    <property type="entry name" value="Nuclear receptor ligand-binding domain"/>
    <property type="match status" value="1"/>
</dbReference>
<dbReference type="PROSITE" id="PS51843">
    <property type="entry name" value="NR_LBD"/>
    <property type="match status" value="1"/>
</dbReference>
<dbReference type="PROSITE" id="PS00031">
    <property type="entry name" value="NUCLEAR_REC_DBD_1"/>
    <property type="match status" value="1"/>
</dbReference>
<dbReference type="PROSITE" id="PS51030">
    <property type="entry name" value="NUCLEAR_REC_DBD_2"/>
    <property type="match status" value="1"/>
</dbReference>
<organism>
    <name type="scientific">Bos taurus</name>
    <name type="common">Bovine</name>
    <dbReference type="NCBI Taxonomy" id="9913"/>
    <lineage>
        <taxon>Eukaryota</taxon>
        <taxon>Metazoa</taxon>
        <taxon>Chordata</taxon>
        <taxon>Craniata</taxon>
        <taxon>Vertebrata</taxon>
        <taxon>Euteleostomi</taxon>
        <taxon>Mammalia</taxon>
        <taxon>Eutheria</taxon>
        <taxon>Laurasiatheria</taxon>
        <taxon>Artiodactyla</taxon>
        <taxon>Ruminantia</taxon>
        <taxon>Pecora</taxon>
        <taxon>Bovidae</taxon>
        <taxon>Bovinae</taxon>
        <taxon>Bos</taxon>
    </lineage>
</organism>
<accession>Q9TTR8</accession>
<proteinExistence type="evidence at transcript level"/>
<evidence type="ECO:0000250" key="1"/>
<evidence type="ECO:0000250" key="2">
    <source>
        <dbReference type="UniProtKB" id="P10589"/>
    </source>
</evidence>
<evidence type="ECO:0000255" key="3">
    <source>
        <dbReference type="PROSITE-ProRule" id="PRU00407"/>
    </source>
</evidence>
<evidence type="ECO:0000255" key="4">
    <source>
        <dbReference type="PROSITE-ProRule" id="PRU01189"/>
    </source>
</evidence>
<evidence type="ECO:0000256" key="5">
    <source>
        <dbReference type="SAM" id="MobiDB-lite"/>
    </source>
</evidence>
<evidence type="ECO:0000305" key="6"/>